<organism>
    <name type="scientific">Arabidopsis thaliana</name>
    <name type="common">Mouse-ear cress</name>
    <dbReference type="NCBI Taxonomy" id="3702"/>
    <lineage>
        <taxon>Eukaryota</taxon>
        <taxon>Viridiplantae</taxon>
        <taxon>Streptophyta</taxon>
        <taxon>Embryophyta</taxon>
        <taxon>Tracheophyta</taxon>
        <taxon>Spermatophyta</taxon>
        <taxon>Magnoliopsida</taxon>
        <taxon>eudicotyledons</taxon>
        <taxon>Gunneridae</taxon>
        <taxon>Pentapetalae</taxon>
        <taxon>rosids</taxon>
        <taxon>malvids</taxon>
        <taxon>Brassicales</taxon>
        <taxon>Brassicaceae</taxon>
        <taxon>Camelineae</taxon>
        <taxon>Arabidopsis</taxon>
    </lineage>
</organism>
<dbReference type="EC" id="3.1.1.-" evidence="5"/>
<dbReference type="EMBL" id="AB010072">
    <property type="protein sequence ID" value="BAB09701.1"/>
    <property type="molecule type" value="Genomic_DNA"/>
</dbReference>
<dbReference type="EMBL" id="CP002688">
    <property type="protein sequence ID" value="AED94623.1"/>
    <property type="molecule type" value="Genomic_DNA"/>
</dbReference>
<dbReference type="RefSeq" id="NP_198915.1">
    <property type="nucleotide sequence ID" value="NM_123464.2"/>
</dbReference>
<dbReference type="SMR" id="Q9FLN0"/>
<dbReference type="FunCoup" id="Q9FLN0">
    <property type="interactions" value="112"/>
</dbReference>
<dbReference type="STRING" id="3702.Q9FLN0"/>
<dbReference type="GlyCosmos" id="Q9FLN0">
    <property type="glycosylation" value="5 sites, No reported glycans"/>
</dbReference>
<dbReference type="GlyGen" id="Q9FLN0">
    <property type="glycosylation" value="5 sites"/>
</dbReference>
<dbReference type="PaxDb" id="3702-AT5G40990.1"/>
<dbReference type="ProteomicsDB" id="230159"/>
<dbReference type="EnsemblPlants" id="AT5G40990.1">
    <property type="protein sequence ID" value="AT5G40990.1"/>
    <property type="gene ID" value="AT5G40990"/>
</dbReference>
<dbReference type="GeneID" id="834101"/>
<dbReference type="Gramene" id="AT5G40990.1">
    <property type="protein sequence ID" value="AT5G40990.1"/>
    <property type="gene ID" value="AT5G40990"/>
</dbReference>
<dbReference type="KEGG" id="ath:AT5G40990"/>
<dbReference type="Araport" id="AT5G40990"/>
<dbReference type="TAIR" id="AT5G40990">
    <property type="gene designation" value="GLIP1"/>
</dbReference>
<dbReference type="eggNOG" id="ENOG502QQ4G">
    <property type="taxonomic scope" value="Eukaryota"/>
</dbReference>
<dbReference type="HOGENOM" id="CLU_015101_0_2_1"/>
<dbReference type="InParanoid" id="Q9FLN0"/>
<dbReference type="OMA" id="NHELSGF"/>
<dbReference type="PhylomeDB" id="Q9FLN0"/>
<dbReference type="BioCyc" id="ARA:AT5G40990-MONOMER"/>
<dbReference type="PRO" id="PR:Q9FLN0"/>
<dbReference type="Proteomes" id="UP000006548">
    <property type="component" value="Chromosome 5"/>
</dbReference>
<dbReference type="ExpressionAtlas" id="Q9FLN0">
    <property type="expression patterns" value="baseline and differential"/>
</dbReference>
<dbReference type="GO" id="GO:0005615">
    <property type="term" value="C:extracellular space"/>
    <property type="evidence" value="ECO:0000314"/>
    <property type="project" value="UniProtKB"/>
</dbReference>
<dbReference type="GO" id="GO:0016298">
    <property type="term" value="F:lipase activity"/>
    <property type="evidence" value="ECO:0000314"/>
    <property type="project" value="UniProtKB"/>
</dbReference>
<dbReference type="GO" id="GO:0042742">
    <property type="term" value="P:defense response to bacterium"/>
    <property type="evidence" value="ECO:0000315"/>
    <property type="project" value="TAIR"/>
</dbReference>
<dbReference type="GO" id="GO:0050832">
    <property type="term" value="P:defense response to fungus"/>
    <property type="evidence" value="ECO:0000315"/>
    <property type="project" value="UniProtKB"/>
</dbReference>
<dbReference type="GO" id="GO:0009866">
    <property type="term" value="P:induced systemic resistance, ethylene mediated signaling pathway"/>
    <property type="evidence" value="ECO:0000315"/>
    <property type="project" value="TAIR"/>
</dbReference>
<dbReference type="GO" id="GO:0009871">
    <property type="term" value="P:jasmonic acid and ethylene-dependent systemic resistance, ethylene mediated signaling pathway"/>
    <property type="evidence" value="ECO:0000315"/>
    <property type="project" value="UniProtKB"/>
</dbReference>
<dbReference type="GO" id="GO:0016042">
    <property type="term" value="P:lipid catabolic process"/>
    <property type="evidence" value="ECO:0007669"/>
    <property type="project" value="UniProtKB-KW"/>
</dbReference>
<dbReference type="GO" id="GO:0009620">
    <property type="term" value="P:response to fungus"/>
    <property type="evidence" value="ECO:0000315"/>
    <property type="project" value="TAIR"/>
</dbReference>
<dbReference type="GO" id="GO:0009751">
    <property type="term" value="P:response to salicylic acid"/>
    <property type="evidence" value="ECO:0000270"/>
    <property type="project" value="TAIR"/>
</dbReference>
<dbReference type="GO" id="GO:0009627">
    <property type="term" value="P:systemic acquired resistance"/>
    <property type="evidence" value="ECO:0000315"/>
    <property type="project" value="UniProtKB"/>
</dbReference>
<dbReference type="CDD" id="cd01837">
    <property type="entry name" value="SGNH_plant_lipase_like"/>
    <property type="match status" value="1"/>
</dbReference>
<dbReference type="Gene3D" id="3.40.50.1110">
    <property type="entry name" value="SGNH hydrolase"/>
    <property type="match status" value="1"/>
</dbReference>
<dbReference type="InterPro" id="IPR001087">
    <property type="entry name" value="GDSL"/>
</dbReference>
<dbReference type="InterPro" id="IPR044552">
    <property type="entry name" value="GLIP1-5/GLL25"/>
</dbReference>
<dbReference type="InterPro" id="IPR008265">
    <property type="entry name" value="Lipase_GDSL_AS"/>
</dbReference>
<dbReference type="InterPro" id="IPR036514">
    <property type="entry name" value="SGNH_hydro_sf"/>
</dbReference>
<dbReference type="InterPro" id="IPR035669">
    <property type="entry name" value="SGNH_plant_lipase-like"/>
</dbReference>
<dbReference type="PANTHER" id="PTHR45966:SF1">
    <property type="entry name" value="GDSL ESTERASE_LIPASE 1-RELATED"/>
    <property type="match status" value="1"/>
</dbReference>
<dbReference type="PANTHER" id="PTHR45966">
    <property type="entry name" value="GDSL-LIKE LIPASE/ACYLHYDROLASE"/>
    <property type="match status" value="1"/>
</dbReference>
<dbReference type="Pfam" id="PF00657">
    <property type="entry name" value="Lipase_GDSL"/>
    <property type="match status" value="1"/>
</dbReference>
<dbReference type="SUPFAM" id="SSF52266">
    <property type="entry name" value="SGNH hydrolase"/>
    <property type="match status" value="1"/>
</dbReference>
<dbReference type="PROSITE" id="PS01098">
    <property type="entry name" value="LIPASE_GDSL_SER"/>
    <property type="match status" value="1"/>
</dbReference>
<reference key="1">
    <citation type="journal article" date="1998" name="DNA Res.">
        <title>Structural analysis of Arabidopsis thaliana chromosome 5. IV. Sequence features of the regions of 1,456,315 bp covered by nineteen physically assigned P1 and TAC clones.</title>
        <authorList>
            <person name="Sato S."/>
            <person name="Kaneko T."/>
            <person name="Kotani H."/>
            <person name="Nakamura Y."/>
            <person name="Asamizu E."/>
            <person name="Miyajima N."/>
            <person name="Tabata S."/>
        </authorList>
    </citation>
    <scope>NUCLEOTIDE SEQUENCE [LARGE SCALE GENOMIC DNA]</scope>
    <source>
        <strain>cv. Columbia</strain>
    </source>
</reference>
<reference key="2">
    <citation type="journal article" date="2017" name="Plant J.">
        <title>Araport11: a complete reannotation of the Arabidopsis thaliana reference genome.</title>
        <authorList>
            <person name="Cheng C.Y."/>
            <person name="Krishnakumar V."/>
            <person name="Chan A.P."/>
            <person name="Thibaud-Nissen F."/>
            <person name="Schobel S."/>
            <person name="Town C.D."/>
        </authorList>
    </citation>
    <scope>GENOME REANNOTATION</scope>
    <source>
        <strain>cv. Columbia</strain>
    </source>
</reference>
<reference key="3">
    <citation type="journal article" date="2004" name="Prog. Lipid Res.">
        <title>GDSL family of serine esterases/lipases.</title>
        <authorList>
            <person name="Akoh C.C."/>
            <person name="Lee G.-C."/>
            <person name="Liaw Y.-C."/>
            <person name="Huang T.-H."/>
            <person name="Shaw J.-F."/>
        </authorList>
    </citation>
    <scope>REVIEW</scope>
</reference>
<reference key="4">
    <citation type="journal article" date="2005" name="Plant Cell">
        <title>Secretome analysis reveals an Arabidopsis lipase involved in defense against Alternaria brassicicola.</title>
        <authorList>
            <person name="Oh I.S."/>
            <person name="Park A.R."/>
            <person name="Bae M.S."/>
            <person name="Kwon S.J."/>
            <person name="Kim Y.S."/>
            <person name="Lee J.E."/>
            <person name="Kang N.Y."/>
            <person name="Lee S."/>
            <person name="Cheong H."/>
            <person name="Park O.K."/>
        </authorList>
    </citation>
    <scope>GENE FAMILY</scope>
    <scope>FUNCTION</scope>
    <scope>IDENTIFICATION BY MASS SPECTROMETRY</scope>
    <scope>DISRUPTION PHENOTYPE</scope>
    <scope>SUBCELLULAR LOCATION</scope>
    <scope>INDUCTION BY ETHYLENE</scope>
</reference>
<reference key="5">
    <citation type="journal article" date="2008" name="Pak. J. Biol. Sci.">
        <title>Sequence analysis of GDSL lipase gene family in Arabidopsis thaliana.</title>
        <authorList>
            <person name="Ling H."/>
        </authorList>
    </citation>
    <scope>GENE FAMILY</scope>
</reference>
<gene>
    <name evidence="4" type="primary">GLIP1</name>
    <name evidence="6" type="ordered locus">At5g40990</name>
    <name evidence="7" type="ORF">MEE6.6</name>
</gene>
<name>GLIP1_ARATH</name>
<keyword id="KW-0936">Ethylene signaling pathway</keyword>
<keyword id="KW-0325">Glycoprotein</keyword>
<keyword id="KW-0378">Hydrolase</keyword>
<keyword id="KW-0442">Lipid degradation</keyword>
<keyword id="KW-0443">Lipid metabolism</keyword>
<keyword id="KW-0611">Plant defense</keyword>
<keyword id="KW-1185">Reference proteome</keyword>
<keyword id="KW-0964">Secreted</keyword>
<keyword id="KW-0732">Signal</keyword>
<proteinExistence type="evidence at protein level"/>
<feature type="signal peptide" evidence="2">
    <location>
        <begin position="1"/>
        <end position="25"/>
    </location>
</feature>
<feature type="chain" id="PRO_0000367334" description="GDSL esterase/lipase 1">
    <location>
        <begin position="26"/>
        <end position="374"/>
    </location>
</feature>
<feature type="active site" description="Nucleophile" evidence="1">
    <location>
        <position position="44"/>
    </location>
</feature>
<feature type="active site" description="Charge relay system" evidence="1">
    <location>
        <position position="338"/>
    </location>
</feature>
<feature type="active site" description="Charge relay system" evidence="1">
    <location>
        <position position="341"/>
    </location>
</feature>
<feature type="glycosylation site" description="N-linked (GlcNAc...) asparagine" evidence="2">
    <location>
        <position position="34"/>
    </location>
</feature>
<feature type="glycosylation site" description="N-linked (GlcNAc...) asparagine" evidence="2">
    <location>
        <position position="184"/>
    </location>
</feature>
<feature type="glycosylation site" description="N-linked (GlcNAc...) asparagine" evidence="2">
    <location>
        <position position="203"/>
    </location>
</feature>
<feature type="glycosylation site" description="N-linked (GlcNAc...) asparagine" evidence="2">
    <location>
        <position position="330"/>
    </location>
</feature>
<feature type="glycosylation site" description="N-linked (GlcNAc...) asparagine" evidence="2">
    <location>
        <position position="360"/>
    </location>
</feature>
<evidence type="ECO:0000250" key="1">
    <source>
        <dbReference type="UniProtKB" id="Q09LX1"/>
    </source>
</evidence>
<evidence type="ECO:0000255" key="2"/>
<evidence type="ECO:0000269" key="3">
    <source>
    </source>
</evidence>
<evidence type="ECO:0000303" key="4">
    <source>
    </source>
</evidence>
<evidence type="ECO:0000305" key="5"/>
<evidence type="ECO:0000312" key="6">
    <source>
        <dbReference type="Araport" id="AT5G40990"/>
    </source>
</evidence>
<evidence type="ECO:0000312" key="7">
    <source>
        <dbReference type="EMBL" id="BAB09701.1"/>
    </source>
</evidence>
<sequence length="374" mass="41706">MENSQLVSITFLAYTIIISIGSINCIDNNNLVTNQSALFVFGDSVFDAGNNNYIDTLSSVRSNYWPYGQTTFKSPTGRVSDGRLIPDFIAEYAWLPLIPPNLQPFNGNSQFAYGVNFASGGAGALVGTFSGLVINLRTQLNNFKKVEEMLRSKLGDAEGKRVISRAVYLFHIGLNDYQYPFTTNSSLFQSISNEKYVDYVVGNMTDVFKEVYNLGGRKFGILNTGPYDCAPASLVIDQTKIRSCFQPVTELINMHNEKLLNGLRRLNHELSGFKYALHDYHTSLSERMNDPSKYGFKEGKKACCGSGPLRGINTCGGRMGLSQSYELCENVTDYLFFDPFHLTEKANRQIAELIWSGPTNITGPYNLKALFELN</sequence>
<protein>
    <recommendedName>
        <fullName evidence="4">GDSL esterase/lipase 1</fullName>
        <ecNumber evidence="5">3.1.1.-</ecNumber>
    </recommendedName>
    <alternativeName>
        <fullName>Extracellular lipase 1</fullName>
    </alternativeName>
</protein>
<comment type="function">
    <text evidence="3">Confers resistance to the necrotrophic fungus Alternaria brassicicola. Possesses lipase and antimicrobial activities that directly disrupt fungal spore integrity. Triggers systemic resistance, mostly by the ethylene-dependent pathway.</text>
</comment>
<comment type="subcellular location">
    <subcellularLocation>
        <location evidence="3">Secreted</location>
    </subcellularLocation>
    <text evidence="3">Secreted upon salicylic acid treatment.</text>
</comment>
<comment type="induction">
    <text evidence="3">By ethylene.</text>
</comment>
<comment type="disruption phenotype">
    <text evidence="3">In the resistant cv. Columbia (glip1-1 and glip1-2), confers susceptibility to A.brassicicola.</text>
</comment>
<comment type="similarity">
    <text evidence="5">Belongs to the 'GDSL' lipolytic enzyme family.</text>
</comment>
<accession>Q9FLN0</accession>